<gene>
    <name type="ORF">SPBC14C8.09c</name>
</gene>
<sequence length="297" mass="34305">MNKRQSQLKFGNEGISLAVPKQSLQECSYMSNLITDRESTFLSYFVPSKDPKMLPVYRFMFQESADLKHCNHKMQAWRFPNEIEAFNDDGEEYSGQKLLNVLRKEDVYGMVVCVRWYGGQLLGPVRFQHITNTAKQSIDKYKSVLEEERKKQLLRTETGLLRQSSSRSSSLLDQRIRQITAKDKTVNLLRKTLNRPLLHEVDYHGKSLEILDMLLQSRNSMISSLRSELQEKNQKDKKKEVNKLEEKMTNAKEPNVNVPSMKASSAISVETPETIESEASVDHKEASKIIKDVEKEE</sequence>
<protein>
    <recommendedName>
        <fullName>IMPACT family member C14C8.09c</fullName>
    </recommendedName>
</protein>
<reference key="1">
    <citation type="journal article" date="2002" name="Nature">
        <title>The genome sequence of Schizosaccharomyces pombe.</title>
        <authorList>
            <person name="Wood V."/>
            <person name="Gwilliam R."/>
            <person name="Rajandream M.A."/>
            <person name="Lyne M.H."/>
            <person name="Lyne R."/>
            <person name="Stewart A."/>
            <person name="Sgouros J.G."/>
            <person name="Peat N."/>
            <person name="Hayles J."/>
            <person name="Baker S.G."/>
            <person name="Basham D."/>
            <person name="Bowman S."/>
            <person name="Brooks K."/>
            <person name="Brown D."/>
            <person name="Brown S."/>
            <person name="Chillingworth T."/>
            <person name="Churcher C.M."/>
            <person name="Collins M."/>
            <person name="Connor R."/>
            <person name="Cronin A."/>
            <person name="Davis P."/>
            <person name="Feltwell T."/>
            <person name="Fraser A."/>
            <person name="Gentles S."/>
            <person name="Goble A."/>
            <person name="Hamlin N."/>
            <person name="Harris D.E."/>
            <person name="Hidalgo J."/>
            <person name="Hodgson G."/>
            <person name="Holroyd S."/>
            <person name="Hornsby T."/>
            <person name="Howarth S."/>
            <person name="Huckle E.J."/>
            <person name="Hunt S."/>
            <person name="Jagels K."/>
            <person name="James K.D."/>
            <person name="Jones L."/>
            <person name="Jones M."/>
            <person name="Leather S."/>
            <person name="McDonald S."/>
            <person name="McLean J."/>
            <person name="Mooney P."/>
            <person name="Moule S."/>
            <person name="Mungall K.L."/>
            <person name="Murphy L.D."/>
            <person name="Niblett D."/>
            <person name="Odell C."/>
            <person name="Oliver K."/>
            <person name="O'Neil S."/>
            <person name="Pearson D."/>
            <person name="Quail M.A."/>
            <person name="Rabbinowitsch E."/>
            <person name="Rutherford K.M."/>
            <person name="Rutter S."/>
            <person name="Saunders D."/>
            <person name="Seeger K."/>
            <person name="Sharp S."/>
            <person name="Skelton J."/>
            <person name="Simmonds M.N."/>
            <person name="Squares R."/>
            <person name="Squares S."/>
            <person name="Stevens K."/>
            <person name="Taylor K."/>
            <person name="Taylor R.G."/>
            <person name="Tivey A."/>
            <person name="Walsh S.V."/>
            <person name="Warren T."/>
            <person name="Whitehead S."/>
            <person name="Woodward J.R."/>
            <person name="Volckaert G."/>
            <person name="Aert R."/>
            <person name="Robben J."/>
            <person name="Grymonprez B."/>
            <person name="Weltjens I."/>
            <person name="Vanstreels E."/>
            <person name="Rieger M."/>
            <person name="Schaefer M."/>
            <person name="Mueller-Auer S."/>
            <person name="Gabel C."/>
            <person name="Fuchs M."/>
            <person name="Duesterhoeft A."/>
            <person name="Fritzc C."/>
            <person name="Holzer E."/>
            <person name="Moestl D."/>
            <person name="Hilbert H."/>
            <person name="Borzym K."/>
            <person name="Langer I."/>
            <person name="Beck A."/>
            <person name="Lehrach H."/>
            <person name="Reinhardt R."/>
            <person name="Pohl T.M."/>
            <person name="Eger P."/>
            <person name="Zimmermann W."/>
            <person name="Wedler H."/>
            <person name="Wambutt R."/>
            <person name="Purnelle B."/>
            <person name="Goffeau A."/>
            <person name="Cadieu E."/>
            <person name="Dreano S."/>
            <person name="Gloux S."/>
            <person name="Lelaure V."/>
            <person name="Mottier S."/>
            <person name="Galibert F."/>
            <person name="Aves S.J."/>
            <person name="Xiang Z."/>
            <person name="Hunt C."/>
            <person name="Moore K."/>
            <person name="Hurst S.M."/>
            <person name="Lucas M."/>
            <person name="Rochet M."/>
            <person name="Gaillardin C."/>
            <person name="Tallada V.A."/>
            <person name="Garzon A."/>
            <person name="Thode G."/>
            <person name="Daga R.R."/>
            <person name="Cruzado L."/>
            <person name="Jimenez J."/>
            <person name="Sanchez M."/>
            <person name="del Rey F."/>
            <person name="Benito J."/>
            <person name="Dominguez A."/>
            <person name="Revuelta J.L."/>
            <person name="Moreno S."/>
            <person name="Armstrong J."/>
            <person name="Forsburg S.L."/>
            <person name="Cerutti L."/>
            <person name="Lowe T."/>
            <person name="McCombie W.R."/>
            <person name="Paulsen I."/>
            <person name="Potashkin J."/>
            <person name="Shpakovski G.V."/>
            <person name="Ussery D."/>
            <person name="Barrell B.G."/>
            <person name="Nurse P."/>
        </authorList>
    </citation>
    <scope>NUCLEOTIDE SEQUENCE [LARGE SCALE GENOMIC DNA]</scope>
    <source>
        <strain>972 / ATCC 24843</strain>
    </source>
</reference>
<reference key="2">
    <citation type="journal article" date="2011" name="Science">
        <title>Comparative functional genomics of the fission yeasts.</title>
        <authorList>
            <person name="Rhind N."/>
            <person name="Chen Z."/>
            <person name="Yassour M."/>
            <person name="Thompson D.A."/>
            <person name="Haas B.J."/>
            <person name="Habib N."/>
            <person name="Wapinski I."/>
            <person name="Roy S."/>
            <person name="Lin M.F."/>
            <person name="Heiman D.I."/>
            <person name="Young S.K."/>
            <person name="Furuya K."/>
            <person name="Guo Y."/>
            <person name="Pidoux A."/>
            <person name="Chen H.M."/>
            <person name="Robbertse B."/>
            <person name="Goldberg J.M."/>
            <person name="Aoki K."/>
            <person name="Bayne E.H."/>
            <person name="Berlin A.M."/>
            <person name="Desjardins C.A."/>
            <person name="Dobbs E."/>
            <person name="Dukaj L."/>
            <person name="Fan L."/>
            <person name="FitzGerald M.G."/>
            <person name="French C."/>
            <person name="Gujja S."/>
            <person name="Hansen K."/>
            <person name="Keifenheim D."/>
            <person name="Levin J.Z."/>
            <person name="Mosher R.A."/>
            <person name="Mueller C.A."/>
            <person name="Pfiffner J."/>
            <person name="Priest M."/>
            <person name="Russ C."/>
            <person name="Smialowska A."/>
            <person name="Swoboda P."/>
            <person name="Sykes S.M."/>
            <person name="Vaughn M."/>
            <person name="Vengrova S."/>
            <person name="Yoder R."/>
            <person name="Zeng Q."/>
            <person name="Allshire R."/>
            <person name="Baulcombe D."/>
            <person name="Birren B.W."/>
            <person name="Brown W."/>
            <person name="Ekwall K."/>
            <person name="Kellis M."/>
            <person name="Leatherwood J."/>
            <person name="Levin H."/>
            <person name="Margalit H."/>
            <person name="Martienssen R."/>
            <person name="Nieduszynski C.A."/>
            <person name="Spatafora J.W."/>
            <person name="Friedman N."/>
            <person name="Dalgaard J.Z."/>
            <person name="Baumann P."/>
            <person name="Niki H."/>
            <person name="Regev A."/>
            <person name="Nusbaum C."/>
        </authorList>
    </citation>
    <scope>REVISION OF GENE MODEL</scope>
</reference>
<reference key="3">
    <citation type="journal article" date="2006" name="Nat. Biotechnol.">
        <title>ORFeome cloning and global analysis of protein localization in the fission yeast Schizosaccharomyces pombe.</title>
        <authorList>
            <person name="Matsuyama A."/>
            <person name="Arai R."/>
            <person name="Yashiroda Y."/>
            <person name="Shirai A."/>
            <person name="Kamata A."/>
            <person name="Sekido S."/>
            <person name="Kobayashi Y."/>
            <person name="Hashimoto A."/>
            <person name="Hamamoto M."/>
            <person name="Hiraoka Y."/>
            <person name="Horinouchi S."/>
            <person name="Yoshida M."/>
        </authorList>
    </citation>
    <scope>IDENTIFICATION OF FRAMESHIFT</scope>
    <source>
        <strain>972 / ATCC 24843</strain>
        <strain>JY3</strain>
    </source>
</reference>
<reference key="4">
    <citation type="journal article" date="2011" name="Genetics">
        <title>Augmented annotation of the Schizosaccharomyces pombe genome reveals additional genes required for growth and viability.</title>
        <authorList>
            <person name="Bitton D.A."/>
            <person name="Wood V."/>
            <person name="Scutt P.J."/>
            <person name="Grallert A."/>
            <person name="Yates T."/>
            <person name="Smith D.L."/>
            <person name="Hagan I.M."/>
            <person name="Miller C.J."/>
        </authorList>
    </citation>
    <scope>IDENTIFICATION BY MASS SPECTROMETRY</scope>
</reference>
<proteinExistence type="evidence at protein level"/>
<accession>O60090</accession>
<keyword id="KW-0175">Coiled coil</keyword>
<keyword id="KW-1185">Reference proteome</keyword>
<organism>
    <name type="scientific">Schizosaccharomyces pombe (strain 972 / ATCC 24843)</name>
    <name type="common">Fission yeast</name>
    <dbReference type="NCBI Taxonomy" id="284812"/>
    <lineage>
        <taxon>Eukaryota</taxon>
        <taxon>Fungi</taxon>
        <taxon>Dikarya</taxon>
        <taxon>Ascomycota</taxon>
        <taxon>Taphrinomycotina</taxon>
        <taxon>Schizosaccharomycetes</taxon>
        <taxon>Schizosaccharomycetales</taxon>
        <taxon>Schizosaccharomycetaceae</taxon>
        <taxon>Schizosaccharomyces</taxon>
    </lineage>
</organism>
<name>YO29_SCHPO</name>
<evidence type="ECO:0000255" key="1"/>
<evidence type="ECO:0000256" key="2">
    <source>
        <dbReference type="SAM" id="MobiDB-lite"/>
    </source>
</evidence>
<evidence type="ECO:0000305" key="3"/>
<feature type="chain" id="PRO_0000316615" description="IMPACT family member C14C8.09c">
    <location>
        <begin position="1"/>
        <end position="297"/>
    </location>
</feature>
<feature type="region of interest" description="Disordered" evidence="2">
    <location>
        <begin position="228"/>
        <end position="297"/>
    </location>
</feature>
<feature type="coiled-coil region" evidence="1">
    <location>
        <begin position="225"/>
        <end position="255"/>
    </location>
</feature>
<feature type="compositionally biased region" description="Basic and acidic residues" evidence="2">
    <location>
        <begin position="228"/>
        <end position="250"/>
    </location>
</feature>
<feature type="compositionally biased region" description="Basic and acidic residues" evidence="2">
    <location>
        <begin position="280"/>
        <end position="297"/>
    </location>
</feature>
<dbReference type="EMBL" id="CU329671">
    <property type="protein sequence ID" value="CAA18427.3"/>
    <property type="status" value="ALT_FRAME"/>
    <property type="molecule type" value="Genomic_DNA"/>
</dbReference>
<dbReference type="PIR" id="T39437">
    <property type="entry name" value="T39437"/>
</dbReference>
<dbReference type="SMR" id="O60090"/>
<dbReference type="STRING" id="284812.O60090"/>
<dbReference type="iPTMnet" id="O60090"/>
<dbReference type="PaxDb" id="4896-SPBC14C8.09c.1"/>
<dbReference type="PomBase" id="SPBC14C8.09c"/>
<dbReference type="eggNOG" id="KOG3299">
    <property type="taxonomic scope" value="Eukaryota"/>
</dbReference>
<dbReference type="HOGENOM" id="CLU_040315_0_0_1"/>
<dbReference type="InParanoid" id="O60090"/>
<dbReference type="PRO" id="PR:O60090"/>
<dbReference type="Proteomes" id="UP000002485">
    <property type="component" value="Chromosome II"/>
</dbReference>
<dbReference type="GO" id="GO:0035861">
    <property type="term" value="C:site of double-strand break"/>
    <property type="evidence" value="ECO:0000314"/>
    <property type="project" value="PomBase"/>
</dbReference>
<dbReference type="GO" id="GO:0140469">
    <property type="term" value="P:GCN2-mediated signaling"/>
    <property type="evidence" value="ECO:0000318"/>
    <property type="project" value="GO_Central"/>
</dbReference>
<dbReference type="GO" id="GO:1990611">
    <property type="term" value="P:regulation of cytoplasmic translational initiation in response to stress"/>
    <property type="evidence" value="ECO:0000250"/>
    <property type="project" value="PomBase"/>
</dbReference>
<dbReference type="Gene3D" id="3.30.230.30">
    <property type="entry name" value="Impact, N-terminal domain"/>
    <property type="match status" value="1"/>
</dbReference>
<dbReference type="InterPro" id="IPR023582">
    <property type="entry name" value="Impact"/>
</dbReference>
<dbReference type="InterPro" id="IPR001498">
    <property type="entry name" value="Impact_N"/>
</dbReference>
<dbReference type="InterPro" id="IPR036956">
    <property type="entry name" value="Impact_N_sf"/>
</dbReference>
<dbReference type="InterPro" id="IPR020568">
    <property type="entry name" value="Ribosomal_Su5_D2-typ_SF"/>
</dbReference>
<dbReference type="PANTHER" id="PTHR16301:SF26">
    <property type="entry name" value="IMPACT FAMILY MEMBER C14C8.09C"/>
    <property type="match status" value="1"/>
</dbReference>
<dbReference type="PANTHER" id="PTHR16301">
    <property type="entry name" value="IMPACT-RELATED"/>
    <property type="match status" value="1"/>
</dbReference>
<dbReference type="Pfam" id="PF01205">
    <property type="entry name" value="UPF0029"/>
    <property type="match status" value="1"/>
</dbReference>
<dbReference type="SUPFAM" id="SSF54211">
    <property type="entry name" value="Ribosomal protein S5 domain 2-like"/>
    <property type="match status" value="1"/>
</dbReference>
<comment type="similarity">
    <text evidence="3">Belongs to the IMPACT family.</text>
</comment>
<comment type="sequence caution" evidence="3">
    <conflict type="frameshift">
        <sequence resource="EMBL-CDS" id="CAA18427"/>
    </conflict>
</comment>